<comment type="function">
    <text evidence="1">Binds to the 23S rRNA.</text>
</comment>
<comment type="similarity">
    <text evidence="1">Belongs to the bacterial ribosomal protein bL9 family.</text>
</comment>
<name>RL9_HELPH</name>
<sequence>MKVLLLEDVKNLGKAGEVCEVKDGYGNNFLIANKKAKLATNEVINKYKAEAKKKAEKEALEKAQKLQMVETLQTITLTIHKKVGANGSLFGAITKEEITERLKEQHASLNLDKKDIELKHPIKSTGIYEIEVKLGSGVVGAFKIDVVAE</sequence>
<feature type="chain" id="PRO_0000258460" description="Large ribosomal subunit protein bL9">
    <location>
        <begin position="1"/>
        <end position="149"/>
    </location>
</feature>
<organism>
    <name type="scientific">Helicobacter pylori (strain HPAG1)</name>
    <dbReference type="NCBI Taxonomy" id="357544"/>
    <lineage>
        <taxon>Bacteria</taxon>
        <taxon>Pseudomonadati</taxon>
        <taxon>Campylobacterota</taxon>
        <taxon>Epsilonproteobacteria</taxon>
        <taxon>Campylobacterales</taxon>
        <taxon>Helicobacteraceae</taxon>
        <taxon>Helicobacter</taxon>
    </lineage>
</organism>
<gene>
    <name evidence="1" type="primary">rplI</name>
    <name type="ordered locus">HPAG1_0488</name>
</gene>
<protein>
    <recommendedName>
        <fullName evidence="1">Large ribosomal subunit protein bL9</fullName>
    </recommendedName>
    <alternativeName>
        <fullName evidence="2">50S ribosomal protein L9</fullName>
    </alternativeName>
</protein>
<proteinExistence type="inferred from homology"/>
<evidence type="ECO:0000255" key="1">
    <source>
        <dbReference type="HAMAP-Rule" id="MF_00503"/>
    </source>
</evidence>
<evidence type="ECO:0000305" key="2"/>
<reference key="1">
    <citation type="journal article" date="2006" name="Proc. Natl. Acad. Sci. U.S.A.">
        <title>The complete genome sequence of a chronic atrophic gastritis Helicobacter pylori strain: evolution during disease progression.</title>
        <authorList>
            <person name="Oh J.D."/>
            <person name="Kling-Baeckhed H."/>
            <person name="Giannakis M."/>
            <person name="Xu J."/>
            <person name="Fulton R.S."/>
            <person name="Fulton L.A."/>
            <person name="Cordum H.S."/>
            <person name="Wang C."/>
            <person name="Elliott G."/>
            <person name="Edwards J."/>
            <person name="Mardis E.R."/>
            <person name="Engstrand L.G."/>
            <person name="Gordon J.I."/>
        </authorList>
    </citation>
    <scope>NUCLEOTIDE SEQUENCE [LARGE SCALE GENOMIC DNA]</scope>
    <source>
        <strain>HPAG1</strain>
    </source>
</reference>
<accession>Q1CU17</accession>
<dbReference type="EMBL" id="CP000241">
    <property type="protein sequence ID" value="ABF84555.1"/>
    <property type="molecule type" value="Genomic_DNA"/>
</dbReference>
<dbReference type="RefSeq" id="WP_000866259.1">
    <property type="nucleotide sequence ID" value="NC_008086.1"/>
</dbReference>
<dbReference type="SMR" id="Q1CU17"/>
<dbReference type="KEGG" id="hpa:HPAG1_0488"/>
<dbReference type="HOGENOM" id="CLU_078938_3_0_7"/>
<dbReference type="GO" id="GO:1990904">
    <property type="term" value="C:ribonucleoprotein complex"/>
    <property type="evidence" value="ECO:0007669"/>
    <property type="project" value="UniProtKB-KW"/>
</dbReference>
<dbReference type="GO" id="GO:0005840">
    <property type="term" value="C:ribosome"/>
    <property type="evidence" value="ECO:0007669"/>
    <property type="project" value="UniProtKB-KW"/>
</dbReference>
<dbReference type="GO" id="GO:0019843">
    <property type="term" value="F:rRNA binding"/>
    <property type="evidence" value="ECO:0007669"/>
    <property type="project" value="UniProtKB-UniRule"/>
</dbReference>
<dbReference type="GO" id="GO:0003735">
    <property type="term" value="F:structural constituent of ribosome"/>
    <property type="evidence" value="ECO:0007669"/>
    <property type="project" value="InterPro"/>
</dbReference>
<dbReference type="GO" id="GO:0006412">
    <property type="term" value="P:translation"/>
    <property type="evidence" value="ECO:0007669"/>
    <property type="project" value="UniProtKB-UniRule"/>
</dbReference>
<dbReference type="FunFam" id="3.10.430.100:FF:000003">
    <property type="entry name" value="50S ribosomal protein L9"/>
    <property type="match status" value="1"/>
</dbReference>
<dbReference type="FunFam" id="3.40.5.10:FF:000002">
    <property type="entry name" value="50S ribosomal protein L9"/>
    <property type="match status" value="1"/>
</dbReference>
<dbReference type="Gene3D" id="3.10.430.100">
    <property type="entry name" value="Ribosomal protein L9, C-terminal domain"/>
    <property type="match status" value="1"/>
</dbReference>
<dbReference type="Gene3D" id="3.40.5.10">
    <property type="entry name" value="Ribosomal protein L9, N-terminal domain"/>
    <property type="match status" value="1"/>
</dbReference>
<dbReference type="HAMAP" id="MF_00503">
    <property type="entry name" value="Ribosomal_bL9"/>
    <property type="match status" value="1"/>
</dbReference>
<dbReference type="InterPro" id="IPR000244">
    <property type="entry name" value="Ribosomal_bL9"/>
</dbReference>
<dbReference type="InterPro" id="IPR009027">
    <property type="entry name" value="Ribosomal_bL9/RNase_H1_N"/>
</dbReference>
<dbReference type="InterPro" id="IPR020594">
    <property type="entry name" value="Ribosomal_bL9_bac/chp"/>
</dbReference>
<dbReference type="InterPro" id="IPR020069">
    <property type="entry name" value="Ribosomal_bL9_C"/>
</dbReference>
<dbReference type="InterPro" id="IPR036791">
    <property type="entry name" value="Ribosomal_bL9_C_sf"/>
</dbReference>
<dbReference type="InterPro" id="IPR020070">
    <property type="entry name" value="Ribosomal_bL9_N"/>
</dbReference>
<dbReference type="InterPro" id="IPR036935">
    <property type="entry name" value="Ribosomal_bL9_N_sf"/>
</dbReference>
<dbReference type="NCBIfam" id="TIGR00158">
    <property type="entry name" value="L9"/>
    <property type="match status" value="1"/>
</dbReference>
<dbReference type="PANTHER" id="PTHR21368">
    <property type="entry name" value="50S RIBOSOMAL PROTEIN L9"/>
    <property type="match status" value="1"/>
</dbReference>
<dbReference type="Pfam" id="PF03948">
    <property type="entry name" value="Ribosomal_L9_C"/>
    <property type="match status" value="1"/>
</dbReference>
<dbReference type="Pfam" id="PF01281">
    <property type="entry name" value="Ribosomal_L9_N"/>
    <property type="match status" value="1"/>
</dbReference>
<dbReference type="SUPFAM" id="SSF55658">
    <property type="entry name" value="L9 N-domain-like"/>
    <property type="match status" value="1"/>
</dbReference>
<dbReference type="SUPFAM" id="SSF55653">
    <property type="entry name" value="Ribosomal protein L9 C-domain"/>
    <property type="match status" value="1"/>
</dbReference>
<dbReference type="PROSITE" id="PS00651">
    <property type="entry name" value="RIBOSOMAL_L9"/>
    <property type="match status" value="1"/>
</dbReference>
<keyword id="KW-0687">Ribonucleoprotein</keyword>
<keyword id="KW-0689">Ribosomal protein</keyword>
<keyword id="KW-0694">RNA-binding</keyword>
<keyword id="KW-0699">rRNA-binding</keyword>